<dbReference type="EMBL" id="X70666">
    <property type="protein sequence ID" value="CAA50004.1"/>
    <property type="molecule type" value="mRNA"/>
</dbReference>
<dbReference type="PDB" id="2PLH">
    <property type="method" value="X-ray"/>
    <property type="resolution" value="2.50 A"/>
    <property type="chains" value="A=17-61"/>
</dbReference>
<dbReference type="PDBsum" id="2PLH"/>
<dbReference type="BMRB" id="P01544"/>
<dbReference type="SMR" id="P01544"/>
<dbReference type="Allergome" id="9834">
    <property type="allergen name" value="Tri a 37"/>
</dbReference>
<dbReference type="PaxDb" id="4565-Traes_1BL_5E6FB0425.1"/>
<dbReference type="EvolutionaryTrace" id="P01544"/>
<dbReference type="Proteomes" id="UP000019116">
    <property type="component" value="Unplaced"/>
</dbReference>
<dbReference type="ExpressionAtlas" id="P01544">
    <property type="expression patterns" value="baseline and differential"/>
</dbReference>
<dbReference type="GO" id="GO:0005576">
    <property type="term" value="C:extracellular region"/>
    <property type="evidence" value="ECO:0007669"/>
    <property type="project" value="UniProtKB-SubCell"/>
</dbReference>
<dbReference type="GO" id="GO:0090729">
    <property type="term" value="F:toxin activity"/>
    <property type="evidence" value="ECO:0007669"/>
    <property type="project" value="UniProtKB-KW"/>
</dbReference>
<dbReference type="GO" id="GO:0006952">
    <property type="term" value="P:defense response"/>
    <property type="evidence" value="ECO:0007669"/>
    <property type="project" value="UniProtKB-KW"/>
</dbReference>
<dbReference type="FunFam" id="3.30.1350.10:FF:000001">
    <property type="entry name" value="Hellethionin-D"/>
    <property type="match status" value="1"/>
</dbReference>
<dbReference type="Gene3D" id="3.30.1350.10">
    <property type="entry name" value="Thionin-like"/>
    <property type="match status" value="1"/>
</dbReference>
<dbReference type="InterPro" id="IPR001010">
    <property type="entry name" value="Thionin"/>
</dbReference>
<dbReference type="InterPro" id="IPR036391">
    <property type="entry name" value="Thionin-like_sf"/>
</dbReference>
<dbReference type="PANTHER" id="PTHR33920:SF9">
    <property type="entry name" value="ALPHA-2-PUROTHIONIN"/>
    <property type="match status" value="1"/>
</dbReference>
<dbReference type="PANTHER" id="PTHR33920">
    <property type="entry name" value="THIONIN-2.1-RELATED"/>
    <property type="match status" value="1"/>
</dbReference>
<dbReference type="Pfam" id="PF00321">
    <property type="entry name" value="Thionin"/>
    <property type="match status" value="1"/>
</dbReference>
<dbReference type="PRINTS" id="PR00287">
    <property type="entry name" value="THIONIN"/>
</dbReference>
<dbReference type="SUPFAM" id="SSF57429">
    <property type="entry name" value="Crambin-like"/>
    <property type="match status" value="1"/>
</dbReference>
<dbReference type="PROSITE" id="PS00271">
    <property type="entry name" value="THIONIN"/>
    <property type="match status" value="1"/>
</dbReference>
<reference key="1">
    <citation type="journal article" date="1994" name="Plant Physiol.">
        <title>cDNA cloning and nucleotide sequences of alpha 1 and alpha 2 thionins from hexaploid wheat endosperm.</title>
        <authorList>
            <person name="Castagnaro A."/>
            <person name="Marana C."/>
            <person name="Carbonero P."/>
            <person name="Garcia-Olmedo F."/>
        </authorList>
    </citation>
    <scope>NUCLEOTIDE SEQUENCE [MRNA]</scope>
    <source>
        <tissue>Endosperm</tissue>
    </source>
</reference>
<reference key="2">
    <citation type="journal article" date="1977" name="J. Biochem.">
        <title>Complete primary structures of two subunits of purothionin A, a lethal protein for brewer's yeast from wheat flour.</title>
        <authorList>
            <person name="Ohtani S."/>
            <person name="Okada T."/>
            <person name="Yoshizumi H."/>
            <person name="Kagamiyama H."/>
        </authorList>
    </citation>
    <scope>PROTEIN SEQUENCE OF 17-61</scope>
    <source>
        <strain>cv. Manitoba 3</strain>
    </source>
</reference>
<reference key="3">
    <citation type="journal article" date="1975" name="Agric. Biol. Chem.">
        <title>The amino acid sequence of purothionin A, a lethal toxic protein to brewer's yeast from wheat.</title>
        <authorList>
            <person name="Ohtani S."/>
            <person name="Okada T."/>
            <person name="Kagamiyama H."/>
            <person name="Yoshizumi H."/>
        </authorList>
    </citation>
    <scope>PROTEIN SEQUENCE OF 17-61</scope>
</reference>
<reference key="4">
    <citation type="journal article" date="1977" name="Cereal Chem.">
        <title>Amino acid sequences of the two alpha-purothionins of hexaploid wheat.</title>
        <authorList>
            <person name="Jones B.L."/>
            <person name="Mak A.S."/>
        </authorList>
    </citation>
    <scope>PROTEIN SEQUENCE OF 17-61</scope>
    <source>
        <strain>cv. Manitou</strain>
    </source>
</reference>
<reference key="5">
    <citation type="journal article" date="1990" name="Proteins">
        <title>Crystal structure of a protein-toxin alpha 1-purothionin at 2.5A and a comparison with predicted models.</title>
        <authorList>
            <person name="Teeter M.M."/>
            <person name="Ma X.-Q."/>
            <person name="Rao U."/>
            <person name="Whitlow M."/>
        </authorList>
    </citation>
    <scope>X-RAY CRYSTALLOGRAPHY (2.5 ANGSTROMS) OF 17-61</scope>
</reference>
<feature type="signal peptide" evidence="2 3 4">
    <location>
        <begin position="1" status="less than"/>
        <end position="16"/>
    </location>
</feature>
<feature type="chain" id="PRO_0000034126" description="Alpha-1-purothionin">
    <location>
        <begin position="17"/>
        <end position="61"/>
    </location>
</feature>
<feature type="propeptide" id="PRO_0000459416" description="Acidic domain" evidence="5">
    <location>
        <begin position="62"/>
        <end position="126"/>
    </location>
</feature>
<feature type="disulfide bond" evidence="1 7">
    <location>
        <begin position="19"/>
        <end position="55"/>
    </location>
</feature>
<feature type="disulfide bond" evidence="1 7">
    <location>
        <begin position="20"/>
        <end position="47"/>
    </location>
</feature>
<feature type="disulfide bond" evidence="1 7">
    <location>
        <begin position="28"/>
        <end position="45"/>
    </location>
</feature>
<feature type="disulfide bond" evidence="1 7">
    <location>
        <begin position="32"/>
        <end position="41"/>
    </location>
</feature>
<feature type="non-terminal residue" evidence="6">
    <location>
        <position position="1"/>
    </location>
</feature>
<feature type="strand" evidence="8">
    <location>
        <begin position="18"/>
        <end position="22"/>
    </location>
</feature>
<feature type="helix" evidence="8">
    <location>
        <begin position="23"/>
        <end position="32"/>
    </location>
</feature>
<feature type="turn" evidence="8">
    <location>
        <begin position="33"/>
        <end position="35"/>
    </location>
</feature>
<feature type="helix" evidence="8">
    <location>
        <begin position="38"/>
        <end position="45"/>
    </location>
</feature>
<feature type="strand" evidence="8">
    <location>
        <begin position="47"/>
        <end position="49"/>
    </location>
</feature>
<feature type="strand" evidence="8">
    <location>
        <begin position="51"/>
        <end position="54"/>
    </location>
</feature>
<evidence type="ECO:0000269" key="1">
    <source>
    </source>
</evidence>
<evidence type="ECO:0000269" key="2">
    <source>
    </source>
</evidence>
<evidence type="ECO:0000269" key="3">
    <source ref="3"/>
</evidence>
<evidence type="ECO:0000269" key="4">
    <source ref="4"/>
</evidence>
<evidence type="ECO:0000305" key="5"/>
<evidence type="ECO:0000312" key="6">
    <source>
        <dbReference type="EMBL" id="CAA50004.1"/>
    </source>
</evidence>
<evidence type="ECO:0007744" key="7">
    <source>
        <dbReference type="PDB" id="2PLH"/>
    </source>
</evidence>
<evidence type="ECO:0007829" key="8">
    <source>
        <dbReference type="PDB" id="2PLH"/>
    </source>
</evidence>
<organism>
    <name type="scientific">Triticum aestivum</name>
    <name type="common">Wheat</name>
    <dbReference type="NCBI Taxonomy" id="4565"/>
    <lineage>
        <taxon>Eukaryota</taxon>
        <taxon>Viridiplantae</taxon>
        <taxon>Streptophyta</taxon>
        <taxon>Embryophyta</taxon>
        <taxon>Tracheophyta</taxon>
        <taxon>Spermatophyta</taxon>
        <taxon>Magnoliopsida</taxon>
        <taxon>Liliopsida</taxon>
        <taxon>Poales</taxon>
        <taxon>Poaceae</taxon>
        <taxon>BOP clade</taxon>
        <taxon>Pooideae</taxon>
        <taxon>Triticodae</taxon>
        <taxon>Triticeae</taxon>
        <taxon>Triticinae</taxon>
        <taxon>Triticum</taxon>
    </lineage>
</organism>
<comment type="function">
    <text>Thionins are small plant proteins which are toxic to animal cells. They seem to exert their toxic effect at the level of the cell membrane. Their precise function is not known.</text>
</comment>
<comment type="subcellular location">
    <subcellularLocation>
        <location>Secreted</location>
    </subcellularLocation>
</comment>
<comment type="similarity">
    <text evidence="5">Belongs to the plant thionin (TC 1.C.44) family. 4 C-C subfamily.</text>
</comment>
<protein>
    <recommendedName>
        <fullName>Alpha-1-purothionin</fullName>
    </recommendedName>
    <alternativeName>
        <fullName>Purothionin A-II</fullName>
    </alternativeName>
</protein>
<keyword id="KW-0002">3D-structure</keyword>
<keyword id="KW-0903">Direct protein sequencing</keyword>
<keyword id="KW-1015">Disulfide bond</keyword>
<keyword id="KW-0611">Plant defense</keyword>
<keyword id="KW-1185">Reference proteome</keyword>
<keyword id="KW-0964">Secreted</keyword>
<keyword id="KW-0732">Signal</keyword>
<keyword id="KW-0800">Toxin</keyword>
<accession>P01544</accession>
<sequence length="126" mass="13526">CLLILGLVLEQLQVEGKSCCRSTLGRNCYNLCRARGAQKLCAGVCRCKISSGLSCPKGFPKLALESNSDEPDTIEYCNLGCRSSVCDYMVNAAADDEEMKLYVENCADACVSFCNGDAGLPSLDAY</sequence>
<name>THN1_WHEAT</name>
<proteinExistence type="evidence at protein level"/>
<gene>
    <name type="primary">THI1.1</name>
    <name type="synonym">PUR-D1</name>
</gene>